<sequence length="280" mass="30912">MMDTKTKLLGLIGHPVDHSFSPIMHNTAIEDLGINYVYLAFDVSEENLKNVVSGAKALQITGFNVTIPHKINIMKYLDEIDEDAKAIGAVNTVKIENGKAIGYNTDGIGAKRTLEEKAGILIDKNILIIGSGGASRAVCFELAKDNNLTIINRNIEKAKILSEEFSKKLKKQKPINYGDLDLDIKNFDIILNTTPVGMHPNTNVDPVIPLKNIKKDAVVMDLIYNPIEPVFLKEAIKYGAKTINGLGMLVYQGAVSFEIWTGMKPDIYVMKKAINSKIRL</sequence>
<dbReference type="EC" id="1.1.1.25" evidence="1"/>
<dbReference type="EMBL" id="CP000745">
    <property type="protein sequence ID" value="ABR65253.1"/>
    <property type="molecule type" value="Genomic_DNA"/>
</dbReference>
<dbReference type="SMR" id="A6VFM7"/>
<dbReference type="STRING" id="426368.MmarC7_0183"/>
<dbReference type="KEGG" id="mmz:MmarC7_0183"/>
<dbReference type="eggNOG" id="arCOG01033">
    <property type="taxonomic scope" value="Archaea"/>
</dbReference>
<dbReference type="HOGENOM" id="CLU_044063_0_1_2"/>
<dbReference type="OrthoDB" id="8744at2157"/>
<dbReference type="UniPathway" id="UPA00053">
    <property type="reaction ID" value="UER00087"/>
</dbReference>
<dbReference type="GO" id="GO:0050661">
    <property type="term" value="F:NADP binding"/>
    <property type="evidence" value="ECO:0007669"/>
    <property type="project" value="InterPro"/>
</dbReference>
<dbReference type="GO" id="GO:0004764">
    <property type="term" value="F:shikimate 3-dehydrogenase (NADP+) activity"/>
    <property type="evidence" value="ECO:0007669"/>
    <property type="project" value="UniProtKB-UniRule"/>
</dbReference>
<dbReference type="GO" id="GO:0008652">
    <property type="term" value="P:amino acid biosynthetic process"/>
    <property type="evidence" value="ECO:0007669"/>
    <property type="project" value="UniProtKB-KW"/>
</dbReference>
<dbReference type="GO" id="GO:0009073">
    <property type="term" value="P:aromatic amino acid family biosynthetic process"/>
    <property type="evidence" value="ECO:0007669"/>
    <property type="project" value="UniProtKB-KW"/>
</dbReference>
<dbReference type="GO" id="GO:0009423">
    <property type="term" value="P:chorismate biosynthetic process"/>
    <property type="evidence" value="ECO:0007669"/>
    <property type="project" value="UniProtKB-UniRule"/>
</dbReference>
<dbReference type="GO" id="GO:0019632">
    <property type="term" value="P:shikimate metabolic process"/>
    <property type="evidence" value="ECO:0007669"/>
    <property type="project" value="InterPro"/>
</dbReference>
<dbReference type="CDD" id="cd01065">
    <property type="entry name" value="NAD_bind_Shikimate_DH"/>
    <property type="match status" value="1"/>
</dbReference>
<dbReference type="FunFam" id="3.40.50.10860:FF:000004">
    <property type="entry name" value="Quinate/shikimate dehydrogenase"/>
    <property type="match status" value="1"/>
</dbReference>
<dbReference type="Gene3D" id="3.40.50.10860">
    <property type="entry name" value="Leucine Dehydrogenase, chain A, domain 1"/>
    <property type="match status" value="1"/>
</dbReference>
<dbReference type="Gene3D" id="3.40.50.720">
    <property type="entry name" value="NAD(P)-binding Rossmann-like Domain"/>
    <property type="match status" value="1"/>
</dbReference>
<dbReference type="HAMAP" id="MF_00222">
    <property type="entry name" value="Shikimate_DH_AroE"/>
    <property type="match status" value="1"/>
</dbReference>
<dbReference type="InterPro" id="IPR046346">
    <property type="entry name" value="Aminoacid_DH-like_N_sf"/>
</dbReference>
<dbReference type="InterPro" id="IPR036291">
    <property type="entry name" value="NAD(P)-bd_dom_sf"/>
</dbReference>
<dbReference type="InterPro" id="IPR041121">
    <property type="entry name" value="SDH_C"/>
</dbReference>
<dbReference type="InterPro" id="IPR011342">
    <property type="entry name" value="Shikimate_DH"/>
</dbReference>
<dbReference type="InterPro" id="IPR013708">
    <property type="entry name" value="Shikimate_DH-bd_N"/>
</dbReference>
<dbReference type="InterPro" id="IPR022893">
    <property type="entry name" value="Shikimate_DH_fam"/>
</dbReference>
<dbReference type="InterPro" id="IPR006151">
    <property type="entry name" value="Shikm_DH/Glu-tRNA_Rdtase"/>
</dbReference>
<dbReference type="NCBIfam" id="TIGR00507">
    <property type="entry name" value="aroE"/>
    <property type="match status" value="1"/>
</dbReference>
<dbReference type="NCBIfam" id="NF001314">
    <property type="entry name" value="PRK00258.2-2"/>
    <property type="match status" value="1"/>
</dbReference>
<dbReference type="NCBIfam" id="NF001319">
    <property type="entry name" value="PRK00258.3-3"/>
    <property type="match status" value="1"/>
</dbReference>
<dbReference type="PANTHER" id="PTHR21089:SF1">
    <property type="entry name" value="BIFUNCTIONAL 3-DEHYDROQUINATE DEHYDRATASE_SHIKIMATE DEHYDROGENASE, CHLOROPLASTIC"/>
    <property type="match status" value="1"/>
</dbReference>
<dbReference type="PANTHER" id="PTHR21089">
    <property type="entry name" value="SHIKIMATE DEHYDROGENASE"/>
    <property type="match status" value="1"/>
</dbReference>
<dbReference type="Pfam" id="PF18317">
    <property type="entry name" value="SDH_C"/>
    <property type="match status" value="1"/>
</dbReference>
<dbReference type="Pfam" id="PF01488">
    <property type="entry name" value="Shikimate_DH"/>
    <property type="match status" value="1"/>
</dbReference>
<dbReference type="Pfam" id="PF08501">
    <property type="entry name" value="Shikimate_dh_N"/>
    <property type="match status" value="1"/>
</dbReference>
<dbReference type="SUPFAM" id="SSF53223">
    <property type="entry name" value="Aminoacid dehydrogenase-like, N-terminal domain"/>
    <property type="match status" value="1"/>
</dbReference>
<dbReference type="SUPFAM" id="SSF51735">
    <property type="entry name" value="NAD(P)-binding Rossmann-fold domains"/>
    <property type="match status" value="1"/>
</dbReference>
<proteinExistence type="inferred from homology"/>
<gene>
    <name evidence="1" type="primary">aroE</name>
    <name type="ordered locus">MmarC7_0183</name>
</gene>
<comment type="function">
    <text evidence="1">Involved in the biosynthesis of the chorismate, which leads to the biosynthesis of aromatic amino acids. Catalyzes the reversible NADPH linked reduction of 3-dehydroshikimate (DHSA) to yield shikimate (SA).</text>
</comment>
<comment type="catalytic activity">
    <reaction evidence="1">
        <text>shikimate + NADP(+) = 3-dehydroshikimate + NADPH + H(+)</text>
        <dbReference type="Rhea" id="RHEA:17737"/>
        <dbReference type="ChEBI" id="CHEBI:15378"/>
        <dbReference type="ChEBI" id="CHEBI:16630"/>
        <dbReference type="ChEBI" id="CHEBI:36208"/>
        <dbReference type="ChEBI" id="CHEBI:57783"/>
        <dbReference type="ChEBI" id="CHEBI:58349"/>
        <dbReference type="EC" id="1.1.1.25"/>
    </reaction>
</comment>
<comment type="pathway">
    <text evidence="1">Metabolic intermediate biosynthesis; chorismate biosynthesis; chorismate from D-erythrose 4-phosphate and phosphoenolpyruvate: step 4/7.</text>
</comment>
<comment type="subunit">
    <text evidence="1">Homodimer.</text>
</comment>
<comment type="similarity">
    <text evidence="1">Belongs to the shikimate dehydrogenase family.</text>
</comment>
<protein>
    <recommendedName>
        <fullName evidence="1">Shikimate dehydrogenase (NADP(+))</fullName>
        <shortName evidence="1">SDH</shortName>
        <ecNumber evidence="1">1.1.1.25</ecNumber>
    </recommendedName>
</protein>
<keyword id="KW-0028">Amino-acid biosynthesis</keyword>
<keyword id="KW-0057">Aromatic amino acid biosynthesis</keyword>
<keyword id="KW-0521">NADP</keyword>
<keyword id="KW-0560">Oxidoreductase</keyword>
<evidence type="ECO:0000255" key="1">
    <source>
        <dbReference type="HAMAP-Rule" id="MF_00222"/>
    </source>
</evidence>
<accession>A6VFM7</accession>
<reference key="1">
    <citation type="submission" date="2007-06" db="EMBL/GenBank/DDBJ databases">
        <title>Complete sequence of Methanococcus maripaludis C7.</title>
        <authorList>
            <consortium name="US DOE Joint Genome Institute"/>
            <person name="Copeland A."/>
            <person name="Lucas S."/>
            <person name="Lapidus A."/>
            <person name="Barry K."/>
            <person name="Glavina del Rio T."/>
            <person name="Dalin E."/>
            <person name="Tice H."/>
            <person name="Pitluck S."/>
            <person name="Clum A."/>
            <person name="Schmutz J."/>
            <person name="Larimer F."/>
            <person name="Land M."/>
            <person name="Hauser L."/>
            <person name="Kyrpides N."/>
            <person name="Anderson I."/>
            <person name="Sieprawska-Lupa M."/>
            <person name="Whitman W.B."/>
            <person name="Richardson P."/>
        </authorList>
    </citation>
    <scope>NUCLEOTIDE SEQUENCE [LARGE SCALE GENOMIC DNA]</scope>
    <source>
        <strain>C7 / ATCC BAA-1331</strain>
    </source>
</reference>
<name>AROE_METM7</name>
<feature type="chain" id="PRO_1000021304" description="Shikimate dehydrogenase (NADP(+))">
    <location>
        <begin position="1"/>
        <end position="280"/>
    </location>
</feature>
<feature type="active site" description="Proton acceptor" evidence="1">
    <location>
        <position position="70"/>
    </location>
</feature>
<feature type="binding site" evidence="1">
    <location>
        <begin position="19"/>
        <end position="21"/>
    </location>
    <ligand>
        <name>shikimate</name>
        <dbReference type="ChEBI" id="CHEBI:36208"/>
    </ligand>
</feature>
<feature type="binding site" evidence="1">
    <location>
        <position position="66"/>
    </location>
    <ligand>
        <name>shikimate</name>
        <dbReference type="ChEBI" id="CHEBI:36208"/>
    </ligand>
</feature>
<feature type="binding site" evidence="1">
    <location>
        <position position="82"/>
    </location>
    <ligand>
        <name>NADP(+)</name>
        <dbReference type="ChEBI" id="CHEBI:58349"/>
    </ligand>
</feature>
<feature type="binding site" evidence="1">
    <location>
        <position position="91"/>
    </location>
    <ligand>
        <name>shikimate</name>
        <dbReference type="ChEBI" id="CHEBI:36208"/>
    </ligand>
</feature>
<feature type="binding site" evidence="1">
    <location>
        <position position="106"/>
    </location>
    <ligand>
        <name>shikimate</name>
        <dbReference type="ChEBI" id="CHEBI:36208"/>
    </ligand>
</feature>
<feature type="binding site" evidence="1">
    <location>
        <begin position="130"/>
        <end position="134"/>
    </location>
    <ligand>
        <name>NADP(+)</name>
        <dbReference type="ChEBI" id="CHEBI:58349"/>
    </ligand>
</feature>
<feature type="binding site" evidence="1">
    <location>
        <position position="222"/>
    </location>
    <ligand>
        <name>NADP(+)</name>
        <dbReference type="ChEBI" id="CHEBI:58349"/>
    </ligand>
</feature>
<feature type="binding site" evidence="1">
    <location>
        <position position="224"/>
    </location>
    <ligand>
        <name>shikimate</name>
        <dbReference type="ChEBI" id="CHEBI:36208"/>
    </ligand>
</feature>
<feature type="binding site" evidence="1">
    <location>
        <position position="245"/>
    </location>
    <ligand>
        <name>NADP(+)</name>
        <dbReference type="ChEBI" id="CHEBI:58349"/>
    </ligand>
</feature>
<organism>
    <name type="scientific">Methanococcus maripaludis (strain C7 / ATCC BAA-1331)</name>
    <dbReference type="NCBI Taxonomy" id="426368"/>
    <lineage>
        <taxon>Archaea</taxon>
        <taxon>Methanobacteriati</taxon>
        <taxon>Methanobacteriota</taxon>
        <taxon>Methanomada group</taxon>
        <taxon>Methanococci</taxon>
        <taxon>Methanococcales</taxon>
        <taxon>Methanococcaceae</taxon>
        <taxon>Methanococcus</taxon>
    </lineage>
</organism>